<feature type="transit peptide" description="Mitochondrion" evidence="1">
    <location>
        <begin position="1"/>
        <end position="20"/>
    </location>
</feature>
<feature type="chain" id="PRO_0000202940" description="Altered inheritance of mitochondria protein 46, mitochondrial">
    <location>
        <begin position="21"/>
        <end position="310"/>
    </location>
</feature>
<feature type="strand" evidence="6">
    <location>
        <begin position="84"/>
        <end position="88"/>
    </location>
</feature>
<feature type="turn" evidence="6">
    <location>
        <begin position="90"/>
        <end position="92"/>
    </location>
</feature>
<feature type="strand" evidence="6">
    <location>
        <begin position="99"/>
        <end position="111"/>
    </location>
</feature>
<feature type="strand" evidence="6">
    <location>
        <begin position="114"/>
        <end position="124"/>
    </location>
</feature>
<feature type="helix" evidence="6">
    <location>
        <begin position="125"/>
        <end position="129"/>
    </location>
</feature>
<feature type="helix" evidence="6">
    <location>
        <begin position="130"/>
        <end position="134"/>
    </location>
</feature>
<feature type="helix" evidence="6">
    <location>
        <begin position="137"/>
        <end position="144"/>
    </location>
</feature>
<feature type="turn" evidence="6">
    <location>
        <begin position="145"/>
        <end position="147"/>
    </location>
</feature>
<feature type="helix" evidence="6">
    <location>
        <begin position="157"/>
        <end position="165"/>
    </location>
</feature>
<feature type="turn" evidence="6">
    <location>
        <begin position="168"/>
        <end position="170"/>
    </location>
</feature>
<feature type="helix" evidence="6">
    <location>
        <begin position="171"/>
        <end position="179"/>
    </location>
</feature>
<feature type="turn" evidence="6">
    <location>
        <begin position="180"/>
        <end position="182"/>
    </location>
</feature>
<feature type="strand" evidence="6">
    <location>
        <begin position="185"/>
        <end position="193"/>
    </location>
</feature>
<feature type="helix" evidence="6">
    <location>
        <begin position="194"/>
        <end position="202"/>
    </location>
</feature>
<feature type="helix" evidence="6">
    <location>
        <begin position="204"/>
        <end position="208"/>
    </location>
</feature>
<feature type="helix" evidence="6">
    <location>
        <begin position="212"/>
        <end position="214"/>
    </location>
</feature>
<feature type="helix" evidence="6">
    <location>
        <begin position="219"/>
        <end position="237"/>
    </location>
</feature>
<feature type="strand" evidence="6">
    <location>
        <begin position="245"/>
        <end position="250"/>
    </location>
</feature>
<feature type="strand" evidence="6">
    <location>
        <begin position="256"/>
        <end position="262"/>
    </location>
</feature>
<feature type="turn" evidence="6">
    <location>
        <begin position="263"/>
        <end position="266"/>
    </location>
</feature>
<feature type="strand" evidence="6">
    <location>
        <begin position="267"/>
        <end position="274"/>
    </location>
</feature>
<feature type="helix" evidence="6">
    <location>
        <begin position="277"/>
        <end position="287"/>
    </location>
</feature>
<feature type="strand" evidence="6">
    <location>
        <begin position="290"/>
        <end position="292"/>
    </location>
</feature>
<feature type="helix" evidence="6">
    <location>
        <begin position="296"/>
        <end position="309"/>
    </location>
</feature>
<protein>
    <recommendedName>
        <fullName>Altered inheritance of mitochondria protein 46, mitochondrial</fullName>
    </recommendedName>
    <alternativeName>
        <fullName>Found in mitochondrial proteome protein 34</fullName>
    </alternativeName>
</protein>
<keyword id="KW-0002">3D-structure</keyword>
<keyword id="KW-0496">Mitochondrion</keyword>
<keyword id="KW-1185">Reference proteome</keyword>
<keyword id="KW-0809">Transit peptide</keyword>
<reference key="1">
    <citation type="journal article" date="1994" name="Science">
        <title>Complete nucleotide sequence of Saccharomyces cerevisiae chromosome VIII.</title>
        <authorList>
            <person name="Johnston M."/>
            <person name="Andrews S."/>
            <person name="Brinkman R."/>
            <person name="Cooper J."/>
            <person name="Ding H."/>
            <person name="Dover J."/>
            <person name="Du Z."/>
            <person name="Favello A."/>
            <person name="Fulton L."/>
            <person name="Gattung S."/>
            <person name="Geisel C."/>
            <person name="Kirsten J."/>
            <person name="Kucaba T."/>
            <person name="Hillier L.W."/>
            <person name="Jier M."/>
            <person name="Johnston L."/>
            <person name="Langston Y."/>
            <person name="Latreille P."/>
            <person name="Louis E.J."/>
            <person name="Macri C."/>
            <person name="Mardis E."/>
            <person name="Menezes S."/>
            <person name="Mouser L."/>
            <person name="Nhan M."/>
            <person name="Rifkin L."/>
            <person name="Riles L."/>
            <person name="St Peter H."/>
            <person name="Trevaskis E."/>
            <person name="Vaughan K."/>
            <person name="Vignati D."/>
            <person name="Wilcox L."/>
            <person name="Wohldman P."/>
            <person name="Waterston R."/>
            <person name="Wilson R."/>
            <person name="Vaudin M."/>
        </authorList>
    </citation>
    <scope>NUCLEOTIDE SEQUENCE [LARGE SCALE GENOMIC DNA]</scope>
    <source>
        <strain>ATCC 204508 / S288c</strain>
    </source>
</reference>
<reference key="2">
    <citation type="journal article" date="2014" name="G3 (Bethesda)">
        <title>The reference genome sequence of Saccharomyces cerevisiae: Then and now.</title>
        <authorList>
            <person name="Engel S.R."/>
            <person name="Dietrich F.S."/>
            <person name="Fisk D.G."/>
            <person name="Binkley G."/>
            <person name="Balakrishnan R."/>
            <person name="Costanzo M.C."/>
            <person name="Dwight S.S."/>
            <person name="Hitz B.C."/>
            <person name="Karra K."/>
            <person name="Nash R.S."/>
            <person name="Weng S."/>
            <person name="Wong E.D."/>
            <person name="Lloyd P."/>
            <person name="Skrzypek M.S."/>
            <person name="Miyasato S.R."/>
            <person name="Simison M."/>
            <person name="Cherry J.M."/>
        </authorList>
    </citation>
    <scope>GENOME REANNOTATION</scope>
    <source>
        <strain>ATCC 204508 / S288c</strain>
    </source>
</reference>
<reference key="3">
    <citation type="journal article" date="2003" name="Nature">
        <title>Global analysis of protein localization in budding yeast.</title>
        <authorList>
            <person name="Huh W.-K."/>
            <person name="Falvo J.V."/>
            <person name="Gerke L.C."/>
            <person name="Carroll A.S."/>
            <person name="Howson R.W."/>
            <person name="Weissman J.S."/>
            <person name="O'Shea E.K."/>
        </authorList>
    </citation>
    <scope>SUBCELLULAR LOCATION [LARGE SCALE ANALYSIS]</scope>
</reference>
<reference key="4">
    <citation type="journal article" date="2003" name="Nature">
        <title>Global analysis of protein expression in yeast.</title>
        <authorList>
            <person name="Ghaemmaghami S."/>
            <person name="Huh W.-K."/>
            <person name="Bower K."/>
            <person name="Howson R.W."/>
            <person name="Belle A."/>
            <person name="Dephoure N."/>
            <person name="O'Shea E.K."/>
            <person name="Weissman J.S."/>
        </authorList>
    </citation>
    <scope>LEVEL OF PROTEIN EXPRESSION [LARGE SCALE ANALYSIS]</scope>
</reference>
<reference key="5">
    <citation type="journal article" date="2009" name="PLoS Genet.">
        <title>Computationally driven, quantitative experiments discover genes required for mitochondrial biogenesis.</title>
        <authorList>
            <person name="Hess D.C."/>
            <person name="Myers C.L."/>
            <person name="Huttenhower C."/>
            <person name="Hibbs M.A."/>
            <person name="Hayes A.P."/>
            <person name="Paw J."/>
            <person name="Clore J.J."/>
            <person name="Mendoza R.M."/>
            <person name="Luis B.S."/>
            <person name="Nislow C."/>
            <person name="Giaever G."/>
            <person name="Costanzo M."/>
            <person name="Troyanskaya O.G."/>
            <person name="Caudy A.A."/>
        </authorList>
    </citation>
    <scope>DISRUPTION PHENOTYPE</scope>
</reference>
<name>AIM46_YEAST</name>
<organism>
    <name type="scientific">Saccharomyces cerevisiae (strain ATCC 204508 / S288c)</name>
    <name type="common">Baker's yeast</name>
    <dbReference type="NCBI Taxonomy" id="559292"/>
    <lineage>
        <taxon>Eukaryota</taxon>
        <taxon>Fungi</taxon>
        <taxon>Dikarya</taxon>
        <taxon>Ascomycota</taxon>
        <taxon>Saccharomycotina</taxon>
        <taxon>Saccharomycetes</taxon>
        <taxon>Saccharomycetales</taxon>
        <taxon>Saccharomycetaceae</taxon>
        <taxon>Saccharomyces</taxon>
    </lineage>
</organism>
<comment type="subcellular location">
    <subcellularLocation>
        <location evidence="2">Mitochondrion</location>
    </subcellularLocation>
</comment>
<comment type="disruption phenotype">
    <text evidence="4">Increases frequency of mitochondrial genome loss.</text>
</comment>
<comment type="miscellaneous">
    <text evidence="3">Present with 1350 molecules/cell in log phase SD medium.</text>
</comment>
<comment type="similarity">
    <text evidence="5">Belongs to the AIM18/AIM46 family.</text>
</comment>
<dbReference type="EMBL" id="U00030">
    <property type="protein sequence ID" value="AAB68371.1"/>
    <property type="molecule type" value="Genomic_DNA"/>
</dbReference>
<dbReference type="EMBL" id="BK006934">
    <property type="protein sequence ID" value="DAA06891.1"/>
    <property type="molecule type" value="Genomic_DNA"/>
</dbReference>
<dbReference type="PIR" id="S46694">
    <property type="entry name" value="S46694"/>
</dbReference>
<dbReference type="RefSeq" id="NP_012069.3">
    <property type="nucleotide sequence ID" value="NM_001179330.3"/>
</dbReference>
<dbReference type="PDB" id="8EW9">
    <property type="method" value="X-ray"/>
    <property type="resolution" value="2.00 A"/>
    <property type="chains" value="A=63-310"/>
</dbReference>
<dbReference type="PDBsum" id="8EW9"/>
<dbReference type="SMR" id="P38885"/>
<dbReference type="BioGRID" id="36633">
    <property type="interactions" value="135"/>
</dbReference>
<dbReference type="DIP" id="DIP-4350N"/>
<dbReference type="FunCoup" id="P38885">
    <property type="interactions" value="152"/>
</dbReference>
<dbReference type="IntAct" id="P38885">
    <property type="interactions" value="23"/>
</dbReference>
<dbReference type="STRING" id="4932.YHR199C"/>
<dbReference type="iPTMnet" id="P38885"/>
<dbReference type="PaxDb" id="4932-YHR199C"/>
<dbReference type="PeptideAtlas" id="P38885"/>
<dbReference type="EnsemblFungi" id="YHR199C_mRNA">
    <property type="protein sequence ID" value="YHR199C"/>
    <property type="gene ID" value="YHR199C"/>
</dbReference>
<dbReference type="GeneID" id="856606"/>
<dbReference type="KEGG" id="sce:YHR199C"/>
<dbReference type="AGR" id="SGD:S000001242"/>
<dbReference type="SGD" id="S000001242">
    <property type="gene designation" value="AIM46"/>
</dbReference>
<dbReference type="VEuPathDB" id="FungiDB:YHR199C"/>
<dbReference type="eggNOG" id="ENOG502RGD3">
    <property type="taxonomic scope" value="Eukaryota"/>
</dbReference>
<dbReference type="GeneTree" id="ENSGT00940000176696"/>
<dbReference type="HOGENOM" id="CLU_038840_0_1_1"/>
<dbReference type="InParanoid" id="P38885"/>
<dbReference type="OMA" id="PENSHQD"/>
<dbReference type="OrthoDB" id="18193at2759"/>
<dbReference type="BioCyc" id="YEAST:G3O-31227-MONOMER"/>
<dbReference type="BioGRID-ORCS" id="856606">
    <property type="hits" value="4 hits in 10 CRISPR screens"/>
</dbReference>
<dbReference type="ChiTaRS" id="AIM46">
    <property type="organism name" value="yeast"/>
</dbReference>
<dbReference type="PRO" id="PR:P38885"/>
<dbReference type="Proteomes" id="UP000002311">
    <property type="component" value="Chromosome VIII"/>
</dbReference>
<dbReference type="RNAct" id="P38885">
    <property type="molecule type" value="protein"/>
</dbReference>
<dbReference type="GO" id="GO:0005743">
    <property type="term" value="C:mitochondrial inner membrane"/>
    <property type="evidence" value="ECO:0000314"/>
    <property type="project" value="SGD"/>
</dbReference>
<dbReference type="GO" id="GO:0005739">
    <property type="term" value="C:mitochondrion"/>
    <property type="evidence" value="ECO:0007005"/>
    <property type="project" value="SGD"/>
</dbReference>
<dbReference type="GO" id="GO:0020037">
    <property type="term" value="F:heme binding"/>
    <property type="evidence" value="ECO:0000314"/>
    <property type="project" value="SGD"/>
</dbReference>
<dbReference type="GO" id="GO:0016872">
    <property type="term" value="F:intramolecular lyase activity"/>
    <property type="evidence" value="ECO:0007669"/>
    <property type="project" value="InterPro"/>
</dbReference>
<dbReference type="Gene3D" id="3.50.70.10">
    <property type="match status" value="1"/>
</dbReference>
<dbReference type="InterPro" id="IPR016087">
    <property type="entry name" value="Chalcone_isomerase"/>
</dbReference>
<dbReference type="InterPro" id="IPR016088">
    <property type="entry name" value="Chalcone_isomerase_3-sand"/>
</dbReference>
<dbReference type="InterPro" id="IPR036298">
    <property type="entry name" value="Chalcone_isomerase_sf"/>
</dbReference>
<dbReference type="Pfam" id="PF16035">
    <property type="entry name" value="Chalcone_2"/>
    <property type="match status" value="1"/>
</dbReference>
<dbReference type="SUPFAM" id="SSF54626">
    <property type="entry name" value="Chalcone isomerase"/>
    <property type="match status" value="1"/>
</dbReference>
<evidence type="ECO:0000255" key="1"/>
<evidence type="ECO:0000269" key="2">
    <source>
    </source>
</evidence>
<evidence type="ECO:0000269" key="3">
    <source>
    </source>
</evidence>
<evidence type="ECO:0000269" key="4">
    <source>
    </source>
</evidence>
<evidence type="ECO:0000305" key="5"/>
<evidence type="ECO:0007829" key="6">
    <source>
        <dbReference type="PDB" id="8EW9"/>
    </source>
</evidence>
<sequence length="310" mass="34113">MRLISKVLVKTNCLEVGMRRAPQWYSHYSTTAGNARVNKKGSKVVPVLTGLALASIFAKKWYDDSQIKKADATSVAVDASISAFPKKMGPPQWPFSTQYELIGKGVRCVSSITFKAYGLGIYVAAEDKHLVSEVLDSKFLSQAFIDTAAPPSPENSHQDNLRAALNDPAKAPILINNLLDSGIRLMSKNTPIKAGSFKLLMDGTKKSVLKNPDSQSQDKDRLEAGFQELHDCFRSVKGLVARDDDFFIELNKDCSMNLSYYARKKDEFVILGTVKEPLIGKLLFAHYLAAVDPPSPEARKEVIDALVSLS</sequence>
<gene>
    <name type="primary">AIM46</name>
    <name type="synonym">FMP34</name>
    <name type="ordered locus">YHR199C</name>
</gene>
<proteinExistence type="evidence at protein level"/>
<accession>P38885</accession>
<accession>D3DLE7</accession>